<feature type="chain" id="PRO_1000191093" description="Multidrug resistance protein MdtK">
    <location>
        <begin position="1"/>
        <end position="457"/>
    </location>
</feature>
<feature type="transmembrane region" description="Helical" evidence="1">
    <location>
        <begin position="11"/>
        <end position="31"/>
    </location>
</feature>
<feature type="transmembrane region" description="Helical" evidence="1">
    <location>
        <begin position="53"/>
        <end position="73"/>
    </location>
</feature>
<feature type="transmembrane region" description="Helical" evidence="1">
    <location>
        <begin position="93"/>
        <end position="113"/>
    </location>
</feature>
<feature type="transmembrane region" description="Helical" evidence="1">
    <location>
        <begin position="127"/>
        <end position="147"/>
    </location>
</feature>
<feature type="transmembrane region" description="Helical" evidence="1">
    <location>
        <begin position="160"/>
        <end position="180"/>
    </location>
</feature>
<feature type="transmembrane region" description="Helical" evidence="1">
    <location>
        <begin position="189"/>
        <end position="209"/>
    </location>
</feature>
<feature type="transmembrane region" description="Helical" evidence="1">
    <location>
        <begin position="243"/>
        <end position="263"/>
    </location>
</feature>
<feature type="transmembrane region" description="Helical" evidence="1">
    <location>
        <begin position="276"/>
        <end position="296"/>
    </location>
</feature>
<feature type="transmembrane region" description="Helical" evidence="1">
    <location>
        <begin position="314"/>
        <end position="334"/>
    </location>
</feature>
<feature type="transmembrane region" description="Helical" evidence="1">
    <location>
        <begin position="350"/>
        <end position="370"/>
    </location>
</feature>
<feature type="transmembrane region" description="Helical" evidence="1">
    <location>
        <begin position="387"/>
        <end position="407"/>
    </location>
</feature>
<feature type="transmembrane region" description="Helical" evidence="1">
    <location>
        <begin position="418"/>
        <end position="438"/>
    </location>
</feature>
<keyword id="KW-0050">Antiport</keyword>
<keyword id="KW-0997">Cell inner membrane</keyword>
<keyword id="KW-1003">Cell membrane</keyword>
<keyword id="KW-0406">Ion transport</keyword>
<keyword id="KW-0472">Membrane</keyword>
<keyword id="KW-0915">Sodium</keyword>
<keyword id="KW-0739">Sodium transport</keyword>
<keyword id="KW-0812">Transmembrane</keyword>
<keyword id="KW-1133">Transmembrane helix</keyword>
<keyword id="KW-0813">Transport</keyword>
<evidence type="ECO:0000255" key="1">
    <source>
        <dbReference type="HAMAP-Rule" id="MF_00400"/>
    </source>
</evidence>
<reference key="1">
    <citation type="journal article" date="2009" name="PLoS Genet.">
        <title>Organised genome dynamics in the Escherichia coli species results in highly diverse adaptive paths.</title>
        <authorList>
            <person name="Touchon M."/>
            <person name="Hoede C."/>
            <person name="Tenaillon O."/>
            <person name="Barbe V."/>
            <person name="Baeriswyl S."/>
            <person name="Bidet P."/>
            <person name="Bingen E."/>
            <person name="Bonacorsi S."/>
            <person name="Bouchier C."/>
            <person name="Bouvet O."/>
            <person name="Calteau A."/>
            <person name="Chiapello H."/>
            <person name="Clermont O."/>
            <person name="Cruveiller S."/>
            <person name="Danchin A."/>
            <person name="Diard M."/>
            <person name="Dossat C."/>
            <person name="Karoui M.E."/>
            <person name="Frapy E."/>
            <person name="Garry L."/>
            <person name="Ghigo J.M."/>
            <person name="Gilles A.M."/>
            <person name="Johnson J."/>
            <person name="Le Bouguenec C."/>
            <person name="Lescat M."/>
            <person name="Mangenot S."/>
            <person name="Martinez-Jehanne V."/>
            <person name="Matic I."/>
            <person name="Nassif X."/>
            <person name="Oztas S."/>
            <person name="Petit M.A."/>
            <person name="Pichon C."/>
            <person name="Rouy Z."/>
            <person name="Ruf C.S."/>
            <person name="Schneider D."/>
            <person name="Tourret J."/>
            <person name="Vacherie B."/>
            <person name="Vallenet D."/>
            <person name="Medigue C."/>
            <person name="Rocha E.P.C."/>
            <person name="Denamur E."/>
        </authorList>
    </citation>
    <scope>NUCLEOTIDE SEQUENCE [LARGE SCALE GENOMIC DNA]</scope>
    <source>
        <strain>UMN026 / ExPEC</strain>
    </source>
</reference>
<sequence>MQKYISEARLLLALAIPVILAQIAQTAMGFVDTVMAGGYSATDMAAVAIGTSIWLPAILFGHGLLLALTPVIAQLNGSGRRERIAHQVRQGFWLAGFVSVLIMLVLWNAGYIIRSMENIDPALADKAVGYLRALLWGAPGYLFFQVARNQCEGLAKTKPGMVMGFIGLLVNIPVNYIFIYGHFGMPELGGVGCGVATAAVYWVMFLAMVSYIKRARSMRDIRNEKGTAKPDPAVMKRLIQLGLPIALALFFEVTLFAVVALLVSPLGIVDVAGHQIALNFSSLMFVLPMSLAAAVTIRVGYRLGQGSTLDAQTAARTGLMVGVCMATLTAIFTVSLREQIALLYNDNPEVVTLAAHLMLLAAVYQISDSIQVIGSGILRGYKDTRSIFYITFTAYWVLGLPSGYILALTDLVVEPMGPAGFWIGFIIGLTSAAIMMMLRMRFLQRLPSAIILQRAAR</sequence>
<proteinExistence type="inferred from homology"/>
<organism>
    <name type="scientific">Escherichia coli O17:K52:H18 (strain UMN026 / ExPEC)</name>
    <dbReference type="NCBI Taxonomy" id="585056"/>
    <lineage>
        <taxon>Bacteria</taxon>
        <taxon>Pseudomonadati</taxon>
        <taxon>Pseudomonadota</taxon>
        <taxon>Gammaproteobacteria</taxon>
        <taxon>Enterobacterales</taxon>
        <taxon>Enterobacteriaceae</taxon>
        <taxon>Escherichia</taxon>
    </lineage>
</organism>
<name>MDTK_ECOLU</name>
<gene>
    <name evidence="1" type="primary">mdtK</name>
    <name type="ordered locus">ECUMN_1953</name>
</gene>
<protein>
    <recommendedName>
        <fullName evidence="1">Multidrug resistance protein MdtK</fullName>
    </recommendedName>
    <alternativeName>
        <fullName evidence="1">Multidrug-efflux transporter</fullName>
    </alternativeName>
</protein>
<comment type="function">
    <text evidence="1">Multidrug efflux pump that functions probably as a Na(+)/drug antiporter.</text>
</comment>
<comment type="subcellular location">
    <subcellularLocation>
        <location evidence="1">Cell inner membrane</location>
        <topology evidence="1">Multi-pass membrane protein</topology>
    </subcellularLocation>
</comment>
<comment type="similarity">
    <text evidence="1">Belongs to the multi antimicrobial extrusion (MATE) (TC 2.A.66.1) family. MdtK subfamily.</text>
</comment>
<accession>B7NBB6</accession>
<dbReference type="EMBL" id="CU928163">
    <property type="protein sequence ID" value="CAR13150.1"/>
    <property type="molecule type" value="Genomic_DNA"/>
</dbReference>
<dbReference type="RefSeq" id="WP_001174939.1">
    <property type="nucleotide sequence ID" value="NC_011751.1"/>
</dbReference>
<dbReference type="RefSeq" id="YP_002412682.1">
    <property type="nucleotide sequence ID" value="NC_011751.1"/>
</dbReference>
<dbReference type="SMR" id="B7NBB6"/>
<dbReference type="STRING" id="585056.ECUMN_1953"/>
<dbReference type="KEGG" id="eum:ECUMN_1953"/>
<dbReference type="PATRIC" id="fig|585056.7.peg.2140"/>
<dbReference type="HOGENOM" id="CLU_012893_6_0_6"/>
<dbReference type="Proteomes" id="UP000007097">
    <property type="component" value="Chromosome"/>
</dbReference>
<dbReference type="GO" id="GO:0005886">
    <property type="term" value="C:plasma membrane"/>
    <property type="evidence" value="ECO:0007669"/>
    <property type="project" value="UniProtKB-SubCell"/>
</dbReference>
<dbReference type="GO" id="GO:0015297">
    <property type="term" value="F:antiporter activity"/>
    <property type="evidence" value="ECO:0007669"/>
    <property type="project" value="UniProtKB-UniRule"/>
</dbReference>
<dbReference type="GO" id="GO:0042910">
    <property type="term" value="F:xenobiotic transmembrane transporter activity"/>
    <property type="evidence" value="ECO:0007669"/>
    <property type="project" value="UniProtKB-UniRule"/>
</dbReference>
<dbReference type="GO" id="GO:0006814">
    <property type="term" value="P:sodium ion transport"/>
    <property type="evidence" value="ECO:0007669"/>
    <property type="project" value="UniProtKB-UniRule"/>
</dbReference>
<dbReference type="GO" id="GO:0006855">
    <property type="term" value="P:xenobiotic transmembrane transport"/>
    <property type="evidence" value="ECO:0007669"/>
    <property type="project" value="UniProtKB-UniRule"/>
</dbReference>
<dbReference type="CDD" id="cd13131">
    <property type="entry name" value="MATE_NorM_like"/>
    <property type="match status" value="1"/>
</dbReference>
<dbReference type="HAMAP" id="MF_00400">
    <property type="entry name" value="MdtK"/>
    <property type="match status" value="1"/>
</dbReference>
<dbReference type="InterPro" id="IPR002528">
    <property type="entry name" value="MATE_fam"/>
</dbReference>
<dbReference type="InterPro" id="IPR050222">
    <property type="entry name" value="MATE_MdtK"/>
</dbReference>
<dbReference type="InterPro" id="IPR048279">
    <property type="entry name" value="MdtK-like"/>
</dbReference>
<dbReference type="InterPro" id="IPR022913">
    <property type="entry name" value="Multidrug-R_MdtK"/>
</dbReference>
<dbReference type="NCBIfam" id="TIGR00797">
    <property type="entry name" value="matE"/>
    <property type="match status" value="1"/>
</dbReference>
<dbReference type="PANTHER" id="PTHR43298:SF2">
    <property type="entry name" value="FMN_FAD EXPORTER YEEO-RELATED"/>
    <property type="match status" value="1"/>
</dbReference>
<dbReference type="PANTHER" id="PTHR43298">
    <property type="entry name" value="MULTIDRUG RESISTANCE PROTEIN NORM-RELATED"/>
    <property type="match status" value="1"/>
</dbReference>
<dbReference type="Pfam" id="PF01554">
    <property type="entry name" value="MatE"/>
    <property type="match status" value="2"/>
</dbReference>
<dbReference type="PIRSF" id="PIRSF006603">
    <property type="entry name" value="DinF"/>
    <property type="match status" value="1"/>
</dbReference>